<evidence type="ECO:0000255" key="1">
    <source>
        <dbReference type="HAMAP-Rule" id="MF_00163"/>
    </source>
</evidence>
<comment type="function">
    <text evidence="1">Removes the formyl group from the N-terminal Met of newly synthesized proteins. Requires at least a dipeptide for an efficient rate of reaction. N-terminal L-methionine is a prerequisite for activity but the enzyme has broad specificity at other positions.</text>
</comment>
<comment type="catalytic activity">
    <reaction evidence="1">
        <text>N-terminal N-formyl-L-methionyl-[peptide] + H2O = N-terminal L-methionyl-[peptide] + formate</text>
        <dbReference type="Rhea" id="RHEA:24420"/>
        <dbReference type="Rhea" id="RHEA-COMP:10639"/>
        <dbReference type="Rhea" id="RHEA-COMP:10640"/>
        <dbReference type="ChEBI" id="CHEBI:15377"/>
        <dbReference type="ChEBI" id="CHEBI:15740"/>
        <dbReference type="ChEBI" id="CHEBI:49298"/>
        <dbReference type="ChEBI" id="CHEBI:64731"/>
        <dbReference type="EC" id="3.5.1.88"/>
    </reaction>
</comment>
<comment type="cofactor">
    <cofactor evidence="1">
        <name>Fe(2+)</name>
        <dbReference type="ChEBI" id="CHEBI:29033"/>
    </cofactor>
    <text evidence="1">Binds 1 Fe(2+) ion.</text>
</comment>
<comment type="similarity">
    <text evidence="1">Belongs to the polypeptide deformylase family.</text>
</comment>
<accession>Q6G1G6</accession>
<dbReference type="EC" id="3.5.1.88" evidence="1"/>
<dbReference type="EMBL" id="BX897700">
    <property type="protein sequence ID" value="CAF25576.1"/>
    <property type="molecule type" value="Genomic_DNA"/>
</dbReference>
<dbReference type="RefSeq" id="WP_011178903.1">
    <property type="nucleotide sequence ID" value="NC_005955.1"/>
</dbReference>
<dbReference type="SMR" id="Q6G1G6"/>
<dbReference type="KEGG" id="bqu:BQ00690"/>
<dbReference type="eggNOG" id="COG0242">
    <property type="taxonomic scope" value="Bacteria"/>
</dbReference>
<dbReference type="HOGENOM" id="CLU_061901_2_0_5"/>
<dbReference type="OrthoDB" id="9804313at2"/>
<dbReference type="Proteomes" id="UP000000597">
    <property type="component" value="Chromosome"/>
</dbReference>
<dbReference type="GO" id="GO:0046872">
    <property type="term" value="F:metal ion binding"/>
    <property type="evidence" value="ECO:0007669"/>
    <property type="project" value="UniProtKB-KW"/>
</dbReference>
<dbReference type="GO" id="GO:0042586">
    <property type="term" value="F:peptide deformylase activity"/>
    <property type="evidence" value="ECO:0007669"/>
    <property type="project" value="UniProtKB-UniRule"/>
</dbReference>
<dbReference type="GO" id="GO:0043686">
    <property type="term" value="P:co-translational protein modification"/>
    <property type="evidence" value="ECO:0007669"/>
    <property type="project" value="TreeGrafter"/>
</dbReference>
<dbReference type="GO" id="GO:0006412">
    <property type="term" value="P:translation"/>
    <property type="evidence" value="ECO:0007669"/>
    <property type="project" value="UniProtKB-UniRule"/>
</dbReference>
<dbReference type="CDD" id="cd00487">
    <property type="entry name" value="Pep_deformylase"/>
    <property type="match status" value="1"/>
</dbReference>
<dbReference type="FunFam" id="3.90.45.10:FF:000005">
    <property type="entry name" value="Peptide deformylase"/>
    <property type="match status" value="1"/>
</dbReference>
<dbReference type="Gene3D" id="3.90.45.10">
    <property type="entry name" value="Peptide deformylase"/>
    <property type="match status" value="1"/>
</dbReference>
<dbReference type="HAMAP" id="MF_00163">
    <property type="entry name" value="Pep_deformylase"/>
    <property type="match status" value="1"/>
</dbReference>
<dbReference type="InterPro" id="IPR023635">
    <property type="entry name" value="Peptide_deformylase"/>
</dbReference>
<dbReference type="InterPro" id="IPR036821">
    <property type="entry name" value="Peptide_deformylase_sf"/>
</dbReference>
<dbReference type="NCBIfam" id="TIGR00079">
    <property type="entry name" value="pept_deformyl"/>
    <property type="match status" value="1"/>
</dbReference>
<dbReference type="NCBIfam" id="NF001159">
    <property type="entry name" value="PRK00150.1-3"/>
    <property type="match status" value="1"/>
</dbReference>
<dbReference type="PANTHER" id="PTHR10458">
    <property type="entry name" value="PEPTIDE DEFORMYLASE"/>
    <property type="match status" value="1"/>
</dbReference>
<dbReference type="PANTHER" id="PTHR10458:SF22">
    <property type="entry name" value="PEPTIDE DEFORMYLASE"/>
    <property type="match status" value="1"/>
</dbReference>
<dbReference type="Pfam" id="PF01327">
    <property type="entry name" value="Pep_deformylase"/>
    <property type="match status" value="1"/>
</dbReference>
<dbReference type="PIRSF" id="PIRSF004749">
    <property type="entry name" value="Pep_def"/>
    <property type="match status" value="1"/>
</dbReference>
<dbReference type="PRINTS" id="PR01576">
    <property type="entry name" value="PDEFORMYLASE"/>
</dbReference>
<dbReference type="SUPFAM" id="SSF56420">
    <property type="entry name" value="Peptide deformylase"/>
    <property type="match status" value="1"/>
</dbReference>
<name>DEF_BARQU</name>
<protein>
    <recommendedName>
        <fullName evidence="1">Peptide deformylase</fullName>
        <shortName evidence="1">PDF</shortName>
        <ecNumber evidence="1">3.5.1.88</ecNumber>
    </recommendedName>
    <alternativeName>
        <fullName evidence="1">Polypeptide deformylase</fullName>
    </alternativeName>
</protein>
<organism>
    <name type="scientific">Bartonella quintana (strain Toulouse)</name>
    <name type="common">Rochalimaea quintana</name>
    <dbReference type="NCBI Taxonomy" id="283165"/>
    <lineage>
        <taxon>Bacteria</taxon>
        <taxon>Pseudomonadati</taxon>
        <taxon>Pseudomonadota</taxon>
        <taxon>Alphaproteobacteria</taxon>
        <taxon>Hyphomicrobiales</taxon>
        <taxon>Bartonellaceae</taxon>
        <taxon>Bartonella</taxon>
    </lineage>
</organism>
<feature type="chain" id="PRO_0000301008" description="Peptide deformylase">
    <location>
        <begin position="1"/>
        <end position="176"/>
    </location>
</feature>
<feature type="active site" evidence="1">
    <location>
        <position position="137"/>
    </location>
</feature>
<feature type="binding site" evidence="1">
    <location>
        <position position="94"/>
    </location>
    <ligand>
        <name>Fe cation</name>
        <dbReference type="ChEBI" id="CHEBI:24875"/>
    </ligand>
</feature>
<feature type="binding site" evidence="1">
    <location>
        <position position="136"/>
    </location>
    <ligand>
        <name>Fe cation</name>
        <dbReference type="ChEBI" id="CHEBI:24875"/>
    </ligand>
</feature>
<feature type="binding site" evidence="1">
    <location>
        <position position="140"/>
    </location>
    <ligand>
        <name>Fe cation</name>
        <dbReference type="ChEBI" id="CHEBI:24875"/>
    </ligand>
</feature>
<reference key="1">
    <citation type="journal article" date="2004" name="Proc. Natl. Acad. Sci. U.S.A.">
        <title>The louse-borne human pathogen Bartonella quintana is a genomic derivative of the zoonotic agent Bartonella henselae.</title>
        <authorList>
            <person name="Alsmark U.C.M."/>
            <person name="Frank A.C."/>
            <person name="Karlberg E.O."/>
            <person name="Legault B.-A."/>
            <person name="Ardell D.H."/>
            <person name="Canbaeck B."/>
            <person name="Eriksson A.-S."/>
            <person name="Naeslund A.K."/>
            <person name="Handley S.A."/>
            <person name="Huvet M."/>
            <person name="La Scola B."/>
            <person name="Holmberg M."/>
            <person name="Andersson S.G.E."/>
        </authorList>
    </citation>
    <scope>NUCLEOTIDE SEQUENCE [LARGE SCALE GENOMIC DNA]</scope>
    <source>
        <strain>Toulouse</strain>
    </source>
</reference>
<gene>
    <name evidence="1" type="primary">def</name>
    <name type="ordered locus">BQ00690</name>
</gene>
<proteinExistence type="inferred from homology"/>
<sequence>MPIKPLIILPDPILREVSKPVEHVDSTIQKLADDMLETMYDAQGVGLAAIQIGIPLRMLVIDVSRNETQKNPLVIINPEILWLSDERNICKEGCLSIPEYYTEIERPKRLCVRYQDREGKQTEIEADHLLATCLQHEIDHLNGRLFIDHISKIKRDMVIRKFKKRAKEKNAQEAIL</sequence>
<keyword id="KW-0378">Hydrolase</keyword>
<keyword id="KW-0408">Iron</keyword>
<keyword id="KW-0479">Metal-binding</keyword>
<keyword id="KW-0648">Protein biosynthesis</keyword>